<accession>Q9CY94</accession>
<evidence type="ECO:0000250" key="1"/>
<evidence type="ECO:0000250" key="2">
    <source>
        <dbReference type="UniProtKB" id="Q9BRX5"/>
    </source>
</evidence>
<evidence type="ECO:0000305" key="3"/>
<dbReference type="EMBL" id="AK019225">
    <property type="protein sequence ID" value="BAB31610.1"/>
    <property type="molecule type" value="mRNA"/>
</dbReference>
<dbReference type="EMBL" id="AK146574">
    <property type="protein sequence ID" value="BAE27270.1"/>
    <property type="molecule type" value="mRNA"/>
</dbReference>
<dbReference type="EMBL" id="AK150602">
    <property type="protein sequence ID" value="BAE29694.1"/>
    <property type="molecule type" value="mRNA"/>
</dbReference>
<dbReference type="EMBL" id="AK151243">
    <property type="protein sequence ID" value="BAE30235.1"/>
    <property type="molecule type" value="mRNA"/>
</dbReference>
<dbReference type="EMBL" id="AK152572">
    <property type="protein sequence ID" value="BAE31324.1"/>
    <property type="molecule type" value="mRNA"/>
</dbReference>
<dbReference type="EMBL" id="AK160606">
    <property type="protein sequence ID" value="BAE35909.1"/>
    <property type="molecule type" value="mRNA"/>
</dbReference>
<dbReference type="EMBL" id="BC039794">
    <property type="protein sequence ID" value="AAH39794.1"/>
    <property type="molecule type" value="mRNA"/>
</dbReference>
<dbReference type="EMBL" id="BC064746">
    <property type="protein sequence ID" value="AAH64746.1"/>
    <property type="molecule type" value="mRNA"/>
</dbReference>
<dbReference type="CCDS" id="CCDS22564.1"/>
<dbReference type="RefSeq" id="NP_084474.1">
    <property type="nucleotide sequence ID" value="NM_030198.3"/>
</dbReference>
<dbReference type="SMR" id="Q9CY94"/>
<dbReference type="BioGRID" id="219666">
    <property type="interactions" value="2"/>
</dbReference>
<dbReference type="ComplexPortal" id="CPX-4502">
    <property type="entry name" value="GINS complex"/>
</dbReference>
<dbReference type="FunCoup" id="Q9CY94">
    <property type="interactions" value="2277"/>
</dbReference>
<dbReference type="STRING" id="10090.ENSMUSP00000034094"/>
<dbReference type="PhosphoSitePlus" id="Q9CY94"/>
<dbReference type="PaxDb" id="10090-ENSMUSP00000034094"/>
<dbReference type="PeptideAtlas" id="Q9CY94"/>
<dbReference type="ProteomicsDB" id="291659"/>
<dbReference type="Pumba" id="Q9CY94"/>
<dbReference type="Antibodypedia" id="29079">
    <property type="antibodies" value="98 antibodies from 20 providers"/>
</dbReference>
<dbReference type="DNASU" id="78833"/>
<dbReference type="Ensembl" id="ENSMUST00000034094.11">
    <property type="protein sequence ID" value="ENSMUSP00000034094.9"/>
    <property type="gene ID" value="ENSMUSG00000031669.11"/>
</dbReference>
<dbReference type="GeneID" id="78833"/>
<dbReference type="KEGG" id="mmu:78833"/>
<dbReference type="UCSC" id="uc009myr.1">
    <property type="organism name" value="mouse"/>
</dbReference>
<dbReference type="AGR" id="MGI:1926083"/>
<dbReference type="CTD" id="64785"/>
<dbReference type="MGI" id="MGI:1926083">
    <property type="gene designation" value="Gins3"/>
</dbReference>
<dbReference type="VEuPathDB" id="HostDB:ENSMUSG00000031669"/>
<dbReference type="eggNOG" id="KOG1106">
    <property type="taxonomic scope" value="Eukaryota"/>
</dbReference>
<dbReference type="GeneTree" id="ENSGT00390000001622"/>
<dbReference type="HOGENOM" id="CLU_081646_2_0_1"/>
<dbReference type="InParanoid" id="Q9CY94"/>
<dbReference type="OMA" id="IYKEGWR"/>
<dbReference type="OrthoDB" id="10251744at2759"/>
<dbReference type="PhylomeDB" id="Q9CY94"/>
<dbReference type="TreeFam" id="TF314626"/>
<dbReference type="Reactome" id="R-MMU-176974">
    <property type="pathway name" value="Unwinding of DNA"/>
</dbReference>
<dbReference type="BioGRID-ORCS" id="78833">
    <property type="hits" value="29 hits in 79 CRISPR screens"/>
</dbReference>
<dbReference type="ChiTaRS" id="Gins3">
    <property type="organism name" value="mouse"/>
</dbReference>
<dbReference type="PRO" id="PR:Q9CY94"/>
<dbReference type="Proteomes" id="UP000000589">
    <property type="component" value="Chromosome 8"/>
</dbReference>
<dbReference type="RNAct" id="Q9CY94">
    <property type="molecule type" value="protein"/>
</dbReference>
<dbReference type="Bgee" id="ENSMUSG00000031669">
    <property type="expression patterns" value="Expressed in manus and 177 other cell types or tissues"/>
</dbReference>
<dbReference type="ExpressionAtlas" id="Q9CY94">
    <property type="expression patterns" value="baseline and differential"/>
</dbReference>
<dbReference type="GO" id="GO:0071162">
    <property type="term" value="C:CMG complex"/>
    <property type="evidence" value="ECO:0000250"/>
    <property type="project" value="UniProtKB"/>
</dbReference>
<dbReference type="GO" id="GO:0000811">
    <property type="term" value="C:GINS complex"/>
    <property type="evidence" value="ECO:0000266"/>
    <property type="project" value="ComplexPortal"/>
</dbReference>
<dbReference type="GO" id="GO:0005634">
    <property type="term" value="C:nucleus"/>
    <property type="evidence" value="ECO:0000303"/>
    <property type="project" value="ComplexPortal"/>
</dbReference>
<dbReference type="GO" id="GO:0090398">
    <property type="term" value="P:cellular senescence"/>
    <property type="evidence" value="ECO:0000315"/>
    <property type="project" value="MGI"/>
</dbReference>
<dbReference type="GO" id="GO:0006260">
    <property type="term" value="P:DNA replication"/>
    <property type="evidence" value="ECO:0000315"/>
    <property type="project" value="MGI"/>
</dbReference>
<dbReference type="GO" id="GO:0035264">
    <property type="term" value="P:multicellular organism growth"/>
    <property type="evidence" value="ECO:0000315"/>
    <property type="project" value="MGI"/>
</dbReference>
<dbReference type="CDD" id="cd11713">
    <property type="entry name" value="GINS_A_psf3"/>
    <property type="match status" value="1"/>
</dbReference>
<dbReference type="CDD" id="cd21693">
    <property type="entry name" value="GINS_B_Psf3"/>
    <property type="match status" value="1"/>
</dbReference>
<dbReference type="FunFam" id="1.20.58.2050:FF:000001">
    <property type="entry name" value="DNA replication complex GINS protein PSF3"/>
    <property type="match status" value="1"/>
</dbReference>
<dbReference type="Gene3D" id="1.20.58.2050">
    <property type="match status" value="1"/>
</dbReference>
<dbReference type="InterPro" id="IPR021151">
    <property type="entry name" value="GINS_A"/>
</dbReference>
<dbReference type="InterPro" id="IPR036224">
    <property type="entry name" value="GINS_bundle-like_dom_sf"/>
</dbReference>
<dbReference type="InterPro" id="IPR010492">
    <property type="entry name" value="GINS_Psf3"/>
</dbReference>
<dbReference type="InterPro" id="IPR038437">
    <property type="entry name" value="GINS_Psf3_sf"/>
</dbReference>
<dbReference type="InterPro" id="IPR055221">
    <property type="entry name" value="PSF3_N"/>
</dbReference>
<dbReference type="PANTHER" id="PTHR22768">
    <property type="entry name" value="DNA REPLICATION COMPLEX GINS PROTEIN PSF3"/>
    <property type="match status" value="1"/>
</dbReference>
<dbReference type="PANTHER" id="PTHR22768:SF0">
    <property type="entry name" value="DNA REPLICATION COMPLEX GINS PROTEIN PSF3"/>
    <property type="match status" value="1"/>
</dbReference>
<dbReference type="Pfam" id="PF22466">
    <property type="entry name" value="PSF3_N"/>
    <property type="match status" value="1"/>
</dbReference>
<dbReference type="Pfam" id="PF05916">
    <property type="entry name" value="Sld5"/>
    <property type="match status" value="1"/>
</dbReference>
<dbReference type="SUPFAM" id="SSF158573">
    <property type="entry name" value="GINS helical bundle-like"/>
    <property type="match status" value="1"/>
</dbReference>
<dbReference type="SUPFAM" id="SSF160059">
    <property type="entry name" value="PriA/YqbF domain"/>
    <property type="match status" value="1"/>
</dbReference>
<keyword id="KW-0158">Chromosome</keyword>
<keyword id="KW-0235">DNA replication</keyword>
<keyword id="KW-0539">Nucleus</keyword>
<keyword id="KW-1185">Reference proteome</keyword>
<sequence length="216" mass="24577">MSEAYFPVESGALGPEENFLSLDDILMSQEKLPVRVETPMPRLGAFFLERGAGSEPDHPLPQGTKLELPLWLAKGLFDHKRRILSVELPKMYQEGWRTVFSADANVVDLHKMGPHFYGFGSQLLHFDSPENADISQSLLKTFIGRFRRIMDSSQNSYNEDTSALVARLDETERGLFQIGQRSLNDFQSWEKGQASQITASSLVQNYKKRKFTNMED</sequence>
<comment type="function">
    <text evidence="2">Required for correct functioning of the GINS complex, a complex that plays an essential role in the initiation of DNA replication, and progression of DNA replication forks. GINS complex is a core component of CDC45-MCM-GINS (CMG) helicase, the molecular machine that unwinds template DNA during replication, and around which the replisome is built.</text>
</comment>
<comment type="subunit">
    <text evidence="2">Component of the GINS complex which is a heterotetramer of GINS1, GINS2, GINS3 and GINS4. Forms a stable subcomplex with GINS2. GINS complex interacts with DNA primase in vitro. Component of the CMG helicase complex, a hexameric ring of related MCM2-7 subunits stabilized by CDC45 and the tetrameric GINS complex.</text>
</comment>
<comment type="subcellular location">
    <subcellularLocation>
        <location evidence="2">Nucleus</location>
    </subcellularLocation>
    <subcellularLocation>
        <location evidence="2">Chromosome</location>
    </subcellularLocation>
    <text evidence="2">Associates with chromatin.</text>
</comment>
<comment type="similarity">
    <text evidence="3">Belongs to the GINS3/PSF3 family.</text>
</comment>
<feature type="chain" id="PRO_0000327616" description="DNA replication complex GINS protein PSF3">
    <location>
        <begin position="1"/>
        <end position="216"/>
    </location>
</feature>
<feature type="region of interest" description="Not essential for folding and stability of GINS complex, but may regulate accessibility to the central complex pore" evidence="1">
    <location>
        <begin position="1"/>
        <end position="16"/>
    </location>
</feature>
<reference key="1">
    <citation type="journal article" date="2005" name="Science">
        <title>The transcriptional landscape of the mammalian genome.</title>
        <authorList>
            <person name="Carninci P."/>
            <person name="Kasukawa T."/>
            <person name="Katayama S."/>
            <person name="Gough J."/>
            <person name="Frith M.C."/>
            <person name="Maeda N."/>
            <person name="Oyama R."/>
            <person name="Ravasi T."/>
            <person name="Lenhard B."/>
            <person name="Wells C."/>
            <person name="Kodzius R."/>
            <person name="Shimokawa K."/>
            <person name="Bajic V.B."/>
            <person name="Brenner S.E."/>
            <person name="Batalov S."/>
            <person name="Forrest A.R."/>
            <person name="Zavolan M."/>
            <person name="Davis M.J."/>
            <person name="Wilming L.G."/>
            <person name="Aidinis V."/>
            <person name="Allen J.E."/>
            <person name="Ambesi-Impiombato A."/>
            <person name="Apweiler R."/>
            <person name="Aturaliya R.N."/>
            <person name="Bailey T.L."/>
            <person name="Bansal M."/>
            <person name="Baxter L."/>
            <person name="Beisel K.W."/>
            <person name="Bersano T."/>
            <person name="Bono H."/>
            <person name="Chalk A.M."/>
            <person name="Chiu K.P."/>
            <person name="Choudhary V."/>
            <person name="Christoffels A."/>
            <person name="Clutterbuck D.R."/>
            <person name="Crowe M.L."/>
            <person name="Dalla E."/>
            <person name="Dalrymple B.P."/>
            <person name="de Bono B."/>
            <person name="Della Gatta G."/>
            <person name="di Bernardo D."/>
            <person name="Down T."/>
            <person name="Engstrom P."/>
            <person name="Fagiolini M."/>
            <person name="Faulkner G."/>
            <person name="Fletcher C.F."/>
            <person name="Fukushima T."/>
            <person name="Furuno M."/>
            <person name="Futaki S."/>
            <person name="Gariboldi M."/>
            <person name="Georgii-Hemming P."/>
            <person name="Gingeras T.R."/>
            <person name="Gojobori T."/>
            <person name="Green R.E."/>
            <person name="Gustincich S."/>
            <person name="Harbers M."/>
            <person name="Hayashi Y."/>
            <person name="Hensch T.K."/>
            <person name="Hirokawa N."/>
            <person name="Hill D."/>
            <person name="Huminiecki L."/>
            <person name="Iacono M."/>
            <person name="Ikeo K."/>
            <person name="Iwama A."/>
            <person name="Ishikawa T."/>
            <person name="Jakt M."/>
            <person name="Kanapin A."/>
            <person name="Katoh M."/>
            <person name="Kawasawa Y."/>
            <person name="Kelso J."/>
            <person name="Kitamura H."/>
            <person name="Kitano H."/>
            <person name="Kollias G."/>
            <person name="Krishnan S.P."/>
            <person name="Kruger A."/>
            <person name="Kummerfeld S.K."/>
            <person name="Kurochkin I.V."/>
            <person name="Lareau L.F."/>
            <person name="Lazarevic D."/>
            <person name="Lipovich L."/>
            <person name="Liu J."/>
            <person name="Liuni S."/>
            <person name="McWilliam S."/>
            <person name="Madan Babu M."/>
            <person name="Madera M."/>
            <person name="Marchionni L."/>
            <person name="Matsuda H."/>
            <person name="Matsuzawa S."/>
            <person name="Miki H."/>
            <person name="Mignone F."/>
            <person name="Miyake S."/>
            <person name="Morris K."/>
            <person name="Mottagui-Tabar S."/>
            <person name="Mulder N."/>
            <person name="Nakano N."/>
            <person name="Nakauchi H."/>
            <person name="Ng P."/>
            <person name="Nilsson R."/>
            <person name="Nishiguchi S."/>
            <person name="Nishikawa S."/>
            <person name="Nori F."/>
            <person name="Ohara O."/>
            <person name="Okazaki Y."/>
            <person name="Orlando V."/>
            <person name="Pang K.C."/>
            <person name="Pavan W.J."/>
            <person name="Pavesi G."/>
            <person name="Pesole G."/>
            <person name="Petrovsky N."/>
            <person name="Piazza S."/>
            <person name="Reed J."/>
            <person name="Reid J.F."/>
            <person name="Ring B.Z."/>
            <person name="Ringwald M."/>
            <person name="Rost B."/>
            <person name="Ruan Y."/>
            <person name="Salzberg S.L."/>
            <person name="Sandelin A."/>
            <person name="Schneider C."/>
            <person name="Schoenbach C."/>
            <person name="Sekiguchi K."/>
            <person name="Semple C.A."/>
            <person name="Seno S."/>
            <person name="Sessa L."/>
            <person name="Sheng Y."/>
            <person name="Shibata Y."/>
            <person name="Shimada H."/>
            <person name="Shimada K."/>
            <person name="Silva D."/>
            <person name="Sinclair B."/>
            <person name="Sperling S."/>
            <person name="Stupka E."/>
            <person name="Sugiura K."/>
            <person name="Sultana R."/>
            <person name="Takenaka Y."/>
            <person name="Taki K."/>
            <person name="Tammoja K."/>
            <person name="Tan S.L."/>
            <person name="Tang S."/>
            <person name="Taylor M.S."/>
            <person name="Tegner J."/>
            <person name="Teichmann S.A."/>
            <person name="Ueda H.R."/>
            <person name="van Nimwegen E."/>
            <person name="Verardo R."/>
            <person name="Wei C.L."/>
            <person name="Yagi K."/>
            <person name="Yamanishi H."/>
            <person name="Zabarovsky E."/>
            <person name="Zhu S."/>
            <person name="Zimmer A."/>
            <person name="Hide W."/>
            <person name="Bult C."/>
            <person name="Grimmond S.M."/>
            <person name="Teasdale R.D."/>
            <person name="Liu E.T."/>
            <person name="Brusic V."/>
            <person name="Quackenbush J."/>
            <person name="Wahlestedt C."/>
            <person name="Mattick J.S."/>
            <person name="Hume D.A."/>
            <person name="Kai C."/>
            <person name="Sasaki D."/>
            <person name="Tomaru Y."/>
            <person name="Fukuda S."/>
            <person name="Kanamori-Katayama M."/>
            <person name="Suzuki M."/>
            <person name="Aoki J."/>
            <person name="Arakawa T."/>
            <person name="Iida J."/>
            <person name="Imamura K."/>
            <person name="Itoh M."/>
            <person name="Kato T."/>
            <person name="Kawaji H."/>
            <person name="Kawagashira N."/>
            <person name="Kawashima T."/>
            <person name="Kojima M."/>
            <person name="Kondo S."/>
            <person name="Konno H."/>
            <person name="Nakano K."/>
            <person name="Ninomiya N."/>
            <person name="Nishio T."/>
            <person name="Okada M."/>
            <person name="Plessy C."/>
            <person name="Shibata K."/>
            <person name="Shiraki T."/>
            <person name="Suzuki S."/>
            <person name="Tagami M."/>
            <person name="Waki K."/>
            <person name="Watahiki A."/>
            <person name="Okamura-Oho Y."/>
            <person name="Suzuki H."/>
            <person name="Kawai J."/>
            <person name="Hayashizaki Y."/>
        </authorList>
    </citation>
    <scope>NUCLEOTIDE SEQUENCE [LARGE SCALE MRNA]</scope>
    <source>
        <strain>C57BL/6J</strain>
        <tissue>Bone marrow</tissue>
        <tissue>Heart</tissue>
    </source>
</reference>
<reference key="2">
    <citation type="journal article" date="2004" name="Genome Res.">
        <title>The status, quality, and expansion of the NIH full-length cDNA project: the Mammalian Gene Collection (MGC).</title>
        <authorList>
            <consortium name="The MGC Project Team"/>
        </authorList>
    </citation>
    <scope>NUCLEOTIDE SEQUENCE [LARGE SCALE MRNA]</scope>
    <source>
        <strain>CD-1</strain>
        <strain>Czech II</strain>
        <tissue>Lung</tissue>
        <tissue>Neural stem cell</tissue>
    </source>
</reference>
<name>PSF3_MOUSE</name>
<organism>
    <name type="scientific">Mus musculus</name>
    <name type="common">Mouse</name>
    <dbReference type="NCBI Taxonomy" id="10090"/>
    <lineage>
        <taxon>Eukaryota</taxon>
        <taxon>Metazoa</taxon>
        <taxon>Chordata</taxon>
        <taxon>Craniata</taxon>
        <taxon>Vertebrata</taxon>
        <taxon>Euteleostomi</taxon>
        <taxon>Mammalia</taxon>
        <taxon>Eutheria</taxon>
        <taxon>Euarchontoglires</taxon>
        <taxon>Glires</taxon>
        <taxon>Rodentia</taxon>
        <taxon>Myomorpha</taxon>
        <taxon>Muroidea</taxon>
        <taxon>Muridae</taxon>
        <taxon>Murinae</taxon>
        <taxon>Mus</taxon>
        <taxon>Mus</taxon>
    </lineage>
</organism>
<protein>
    <recommendedName>
        <fullName>DNA replication complex GINS protein PSF3</fullName>
    </recommendedName>
    <alternativeName>
        <fullName>GINS complex subunit 3</fullName>
    </alternativeName>
</protein>
<gene>
    <name type="primary">Gins3</name>
    <name type="synonym">Psf3</name>
</gene>
<proteinExistence type="evidence at transcript level"/>